<name>FLHD_ECOSE</name>
<reference key="1">
    <citation type="journal article" date="2008" name="DNA Res.">
        <title>Complete genome sequence and comparative analysis of the wild-type commensal Escherichia coli strain SE11 isolated from a healthy adult.</title>
        <authorList>
            <person name="Oshima K."/>
            <person name="Toh H."/>
            <person name="Ogura Y."/>
            <person name="Sasamoto H."/>
            <person name="Morita H."/>
            <person name="Park S.-H."/>
            <person name="Ooka T."/>
            <person name="Iyoda S."/>
            <person name="Taylor T.D."/>
            <person name="Hayashi T."/>
            <person name="Itoh K."/>
            <person name="Hattori M."/>
        </authorList>
    </citation>
    <scope>NUCLEOTIDE SEQUENCE [LARGE SCALE GENOMIC DNA]</scope>
    <source>
        <strain>SE11</strain>
    </source>
</reference>
<gene>
    <name evidence="1" type="primary">flhD</name>
    <name type="ordered locus">ECSE_2127</name>
</gene>
<proteinExistence type="inferred from homology"/>
<accession>B6I0U4</accession>
<keyword id="KW-0010">Activator</keyword>
<keyword id="KW-1005">Bacterial flagellum biogenesis</keyword>
<keyword id="KW-0963">Cytoplasm</keyword>
<keyword id="KW-1015">Disulfide bond</keyword>
<keyword id="KW-0238">DNA-binding</keyword>
<keyword id="KW-0804">Transcription</keyword>
<keyword id="KW-0805">Transcription regulation</keyword>
<organism>
    <name type="scientific">Escherichia coli (strain SE11)</name>
    <dbReference type="NCBI Taxonomy" id="409438"/>
    <lineage>
        <taxon>Bacteria</taxon>
        <taxon>Pseudomonadati</taxon>
        <taxon>Pseudomonadota</taxon>
        <taxon>Gammaproteobacteria</taxon>
        <taxon>Enterobacterales</taxon>
        <taxon>Enterobacteriaceae</taxon>
        <taxon>Escherichia</taxon>
    </lineage>
</organism>
<feature type="chain" id="PRO_1000132685" description="Flagellar transcriptional regulator FlhD">
    <location>
        <begin position="1"/>
        <end position="119"/>
    </location>
</feature>
<feature type="disulfide bond" description="Interchain" evidence="1">
    <location>
        <position position="68"/>
    </location>
</feature>
<comment type="function">
    <text evidence="1">Functions in complex with FlhC as a master transcriptional regulator that regulates transcription of several flagellar and non-flagellar operons by binding to their promoter region. Activates expression of class 2 flagellar genes, including fliA, which is a flagellum-specific sigma factor that turns on the class 3 genes. Also regulates genes whose products function in a variety of physiological pathways.</text>
</comment>
<comment type="subunit">
    <text evidence="1">Homodimer; disulfide-linked. Forms a heterohexamer composed of two FlhC and four FlhD subunits. Each FlhC binds a FlhD dimer, forming a heterotrimer, and a hexamer assembles by dimerization of two heterotrimers.</text>
</comment>
<comment type="subcellular location">
    <subcellularLocation>
        <location evidence="1">Cytoplasm</location>
    </subcellularLocation>
</comment>
<comment type="domain">
    <text evidence="1">The C-terminal region contains a putative helix-turn-helix (HTH) motif, suggesting that this region may bind DNA.</text>
</comment>
<comment type="similarity">
    <text evidence="1">Belongs to the FlhD family.</text>
</comment>
<sequence>MGIMHTSELLKHIYDINLSYLLLAQRLIVQDKASAMFRLGINEEMATTLAALTLPQMVKLAETNQLVCHFRFDSHQTITQLTQDSRVDDLQQIHTGIMLSTRLLNDVNQPEEALRKKRA</sequence>
<dbReference type="EMBL" id="AP009240">
    <property type="protein sequence ID" value="BAG77651.1"/>
    <property type="molecule type" value="Genomic_DNA"/>
</dbReference>
<dbReference type="SMR" id="B6I0U4"/>
<dbReference type="KEGG" id="ecy:ECSE_2127"/>
<dbReference type="HOGENOM" id="CLU_144160_0_0_6"/>
<dbReference type="Proteomes" id="UP000008199">
    <property type="component" value="Chromosome"/>
</dbReference>
<dbReference type="GO" id="GO:0005737">
    <property type="term" value="C:cytoplasm"/>
    <property type="evidence" value="ECO:0007669"/>
    <property type="project" value="UniProtKB-SubCell"/>
</dbReference>
<dbReference type="GO" id="GO:0003677">
    <property type="term" value="F:DNA binding"/>
    <property type="evidence" value="ECO:0007669"/>
    <property type="project" value="UniProtKB-UniRule"/>
</dbReference>
<dbReference type="GO" id="GO:0044780">
    <property type="term" value="P:bacterial-type flagellum assembly"/>
    <property type="evidence" value="ECO:0007669"/>
    <property type="project" value="InterPro"/>
</dbReference>
<dbReference type="GO" id="GO:0045893">
    <property type="term" value="P:positive regulation of DNA-templated transcription"/>
    <property type="evidence" value="ECO:0007669"/>
    <property type="project" value="InterPro"/>
</dbReference>
<dbReference type="GO" id="GO:1902208">
    <property type="term" value="P:regulation of bacterial-type flagellum assembly"/>
    <property type="evidence" value="ECO:0007669"/>
    <property type="project" value="UniProtKB-UniRule"/>
</dbReference>
<dbReference type="FunFam" id="1.10.4000.10:FF:000001">
    <property type="entry name" value="Flagellar transcriptional regulator FlhD"/>
    <property type="match status" value="1"/>
</dbReference>
<dbReference type="Gene3D" id="1.10.4000.10">
    <property type="entry name" value="Flagellar transcriptional activator FlhD"/>
    <property type="match status" value="1"/>
</dbReference>
<dbReference type="HAMAP" id="MF_00725">
    <property type="entry name" value="FlhD"/>
    <property type="match status" value="1"/>
</dbReference>
<dbReference type="InterPro" id="IPR023559">
    <property type="entry name" value="Flagellar_FlhD"/>
</dbReference>
<dbReference type="InterPro" id="IPR036194">
    <property type="entry name" value="FlhD_sf"/>
</dbReference>
<dbReference type="NCBIfam" id="NF002783">
    <property type="entry name" value="PRK02909.1-1"/>
    <property type="match status" value="1"/>
</dbReference>
<dbReference type="Pfam" id="PF05247">
    <property type="entry name" value="FlhD"/>
    <property type="match status" value="1"/>
</dbReference>
<dbReference type="SUPFAM" id="SSF63592">
    <property type="entry name" value="Flagellar transcriptional activator FlhD"/>
    <property type="match status" value="1"/>
</dbReference>
<protein>
    <recommendedName>
        <fullName evidence="1">Flagellar transcriptional regulator FlhD</fullName>
    </recommendedName>
</protein>
<evidence type="ECO:0000255" key="1">
    <source>
        <dbReference type="HAMAP-Rule" id="MF_00725"/>
    </source>
</evidence>